<proteinExistence type="inferred from homology"/>
<evidence type="ECO:0000255" key="1">
    <source>
        <dbReference type="HAMAP-Rule" id="MF_00373"/>
    </source>
</evidence>
<evidence type="ECO:0000256" key="2">
    <source>
        <dbReference type="SAM" id="MobiDB-lite"/>
    </source>
</evidence>
<evidence type="ECO:0000305" key="3"/>
<name>RL28_ACTPJ</name>
<accession>B0BTZ6</accession>
<dbReference type="EMBL" id="CP000687">
    <property type="protein sequence ID" value="ABY70563.1"/>
    <property type="molecule type" value="Genomic_DNA"/>
</dbReference>
<dbReference type="RefSeq" id="WP_005599762.1">
    <property type="nucleotide sequence ID" value="NC_010278.1"/>
</dbReference>
<dbReference type="SMR" id="B0BTZ6"/>
<dbReference type="GeneID" id="93297181"/>
<dbReference type="KEGG" id="apj:APJL_2018"/>
<dbReference type="HOGENOM" id="CLU_064548_3_1_6"/>
<dbReference type="Proteomes" id="UP000008547">
    <property type="component" value="Chromosome"/>
</dbReference>
<dbReference type="GO" id="GO:0022625">
    <property type="term" value="C:cytosolic large ribosomal subunit"/>
    <property type="evidence" value="ECO:0007669"/>
    <property type="project" value="TreeGrafter"/>
</dbReference>
<dbReference type="GO" id="GO:0003735">
    <property type="term" value="F:structural constituent of ribosome"/>
    <property type="evidence" value="ECO:0007669"/>
    <property type="project" value="InterPro"/>
</dbReference>
<dbReference type="GO" id="GO:0006412">
    <property type="term" value="P:translation"/>
    <property type="evidence" value="ECO:0007669"/>
    <property type="project" value="UniProtKB-UniRule"/>
</dbReference>
<dbReference type="FunFam" id="2.30.170.40:FF:000001">
    <property type="entry name" value="50S ribosomal protein L28"/>
    <property type="match status" value="1"/>
</dbReference>
<dbReference type="Gene3D" id="2.30.170.40">
    <property type="entry name" value="Ribosomal protein L28/L24"/>
    <property type="match status" value="1"/>
</dbReference>
<dbReference type="HAMAP" id="MF_00373">
    <property type="entry name" value="Ribosomal_bL28"/>
    <property type="match status" value="1"/>
</dbReference>
<dbReference type="InterPro" id="IPR026569">
    <property type="entry name" value="Ribosomal_bL28"/>
</dbReference>
<dbReference type="InterPro" id="IPR034704">
    <property type="entry name" value="Ribosomal_bL28/bL31-like_sf"/>
</dbReference>
<dbReference type="InterPro" id="IPR001383">
    <property type="entry name" value="Ribosomal_bL28_bact-type"/>
</dbReference>
<dbReference type="InterPro" id="IPR037147">
    <property type="entry name" value="Ribosomal_bL28_sf"/>
</dbReference>
<dbReference type="NCBIfam" id="TIGR00009">
    <property type="entry name" value="L28"/>
    <property type="match status" value="1"/>
</dbReference>
<dbReference type="PANTHER" id="PTHR13528">
    <property type="entry name" value="39S RIBOSOMAL PROTEIN L28, MITOCHONDRIAL"/>
    <property type="match status" value="1"/>
</dbReference>
<dbReference type="PANTHER" id="PTHR13528:SF2">
    <property type="entry name" value="LARGE RIBOSOMAL SUBUNIT PROTEIN BL28M"/>
    <property type="match status" value="1"/>
</dbReference>
<dbReference type="Pfam" id="PF00830">
    <property type="entry name" value="Ribosomal_L28"/>
    <property type="match status" value="1"/>
</dbReference>
<dbReference type="SUPFAM" id="SSF143800">
    <property type="entry name" value="L28p-like"/>
    <property type="match status" value="1"/>
</dbReference>
<feature type="chain" id="PRO_1000121574" description="Large ribosomal subunit protein bL28">
    <location>
        <begin position="1"/>
        <end position="78"/>
    </location>
</feature>
<feature type="region of interest" description="Disordered" evidence="2">
    <location>
        <begin position="1"/>
        <end position="20"/>
    </location>
</feature>
<sequence length="78" mass="8966">MSRVCQVTGKRPAVGNNRSHALNATRRRFLPNLHTHRFWVESENRFVTLRLTAKGMRIIDKKGIDAVLAEIRARGEKI</sequence>
<organism>
    <name type="scientific">Actinobacillus pleuropneumoniae serotype 3 (strain JL03)</name>
    <dbReference type="NCBI Taxonomy" id="434271"/>
    <lineage>
        <taxon>Bacteria</taxon>
        <taxon>Pseudomonadati</taxon>
        <taxon>Pseudomonadota</taxon>
        <taxon>Gammaproteobacteria</taxon>
        <taxon>Pasteurellales</taxon>
        <taxon>Pasteurellaceae</taxon>
        <taxon>Actinobacillus</taxon>
    </lineage>
</organism>
<comment type="similarity">
    <text evidence="1">Belongs to the bacterial ribosomal protein bL28 family.</text>
</comment>
<keyword id="KW-0687">Ribonucleoprotein</keyword>
<keyword id="KW-0689">Ribosomal protein</keyword>
<gene>
    <name evidence="1" type="primary">rpmB</name>
    <name type="ordered locus">APJL_2018</name>
</gene>
<protein>
    <recommendedName>
        <fullName evidence="1">Large ribosomal subunit protein bL28</fullName>
    </recommendedName>
    <alternativeName>
        <fullName evidence="3">50S ribosomal protein L28</fullName>
    </alternativeName>
</protein>
<reference key="1">
    <citation type="journal article" date="2008" name="PLoS ONE">
        <title>Genome biology of Actinobacillus pleuropneumoniae JL03, an isolate of serotype 3 prevalent in China.</title>
        <authorList>
            <person name="Xu Z."/>
            <person name="Zhou Y."/>
            <person name="Li L."/>
            <person name="Zhou R."/>
            <person name="Xiao S."/>
            <person name="Wan Y."/>
            <person name="Zhang S."/>
            <person name="Wang K."/>
            <person name="Li W."/>
            <person name="Li L."/>
            <person name="Jin H."/>
            <person name="Kang M."/>
            <person name="Dalai B."/>
            <person name="Li T."/>
            <person name="Liu L."/>
            <person name="Cheng Y."/>
            <person name="Zhang L."/>
            <person name="Xu T."/>
            <person name="Zheng H."/>
            <person name="Pu S."/>
            <person name="Wang B."/>
            <person name="Gu W."/>
            <person name="Zhang X.L."/>
            <person name="Zhu G.-F."/>
            <person name="Wang S."/>
            <person name="Zhao G.-P."/>
            <person name="Chen H."/>
        </authorList>
    </citation>
    <scope>NUCLEOTIDE SEQUENCE [LARGE SCALE GENOMIC DNA]</scope>
    <source>
        <strain>JL03</strain>
    </source>
</reference>